<sequence>MAALPAESDTSERIKVSIADYAVAEAGTISTSGLGSCLGLAIYDPEAGVSALVHPMLPRRDGNDDRPPERFVDSGIDVVVDALLEHGASKASLRAKIAGGAAVVDFGSDDGDSIGDRNIEVAREELSDRGIELVGEEVGGDCGRTVKVDAATGDVNVSRTDGEETTL</sequence>
<organism>
    <name type="scientific">Natronomonas pharaonis (strain ATCC 35678 / DSM 2160 / CIP 103997 / JCM 8858 / NBRC 14720 / NCIMB 2260 / Gabara)</name>
    <name type="common">Halobacterium pharaonis</name>
    <dbReference type="NCBI Taxonomy" id="348780"/>
    <lineage>
        <taxon>Archaea</taxon>
        <taxon>Methanobacteriati</taxon>
        <taxon>Methanobacteriota</taxon>
        <taxon>Stenosarchaea group</taxon>
        <taxon>Halobacteria</taxon>
        <taxon>Halobacteriales</taxon>
        <taxon>Haloarculaceae</taxon>
        <taxon>Natronomonas</taxon>
    </lineage>
</organism>
<feature type="chain" id="PRO_0000251095" description="Probable chemoreceptor glutamine deamidase CheD">
    <location>
        <begin position="1"/>
        <end position="167"/>
    </location>
</feature>
<protein>
    <recommendedName>
        <fullName evidence="1">Probable chemoreceptor glutamine deamidase CheD</fullName>
        <ecNumber evidence="1">3.5.1.44</ecNumber>
    </recommendedName>
</protein>
<gene>
    <name evidence="1" type="primary">cheD</name>
    <name type="ordered locus">NP_2106A</name>
</gene>
<evidence type="ECO:0000255" key="1">
    <source>
        <dbReference type="HAMAP-Rule" id="MF_01440"/>
    </source>
</evidence>
<comment type="function">
    <text evidence="1">Probably deamidates glutamine residues to glutamate on methyl-accepting chemotaxis receptors (MCPs), playing an important role in chemotaxis.</text>
</comment>
<comment type="catalytic activity">
    <reaction evidence="1">
        <text>L-glutaminyl-[protein] + H2O = L-glutamyl-[protein] + NH4(+)</text>
        <dbReference type="Rhea" id="RHEA:16441"/>
        <dbReference type="Rhea" id="RHEA-COMP:10207"/>
        <dbReference type="Rhea" id="RHEA-COMP:10208"/>
        <dbReference type="ChEBI" id="CHEBI:15377"/>
        <dbReference type="ChEBI" id="CHEBI:28938"/>
        <dbReference type="ChEBI" id="CHEBI:29973"/>
        <dbReference type="ChEBI" id="CHEBI:30011"/>
        <dbReference type="EC" id="3.5.1.44"/>
    </reaction>
</comment>
<comment type="similarity">
    <text evidence="1">Belongs to the CheD family.</text>
</comment>
<dbReference type="EC" id="3.5.1.44" evidence="1"/>
<dbReference type="EMBL" id="CR936257">
    <property type="protein sequence ID" value="CAI49144.1"/>
    <property type="molecule type" value="Genomic_DNA"/>
</dbReference>
<dbReference type="RefSeq" id="WP_011322772.1">
    <property type="nucleotide sequence ID" value="NC_007426.1"/>
</dbReference>
<dbReference type="SMR" id="Q3IRU8"/>
<dbReference type="STRING" id="348780.NP_2106A"/>
<dbReference type="EnsemblBacteria" id="CAI49144">
    <property type="protein sequence ID" value="CAI49144"/>
    <property type="gene ID" value="NP_2106A"/>
</dbReference>
<dbReference type="GeneID" id="3702601"/>
<dbReference type="KEGG" id="nph:NP_2106A"/>
<dbReference type="eggNOG" id="arCOG02380">
    <property type="taxonomic scope" value="Archaea"/>
</dbReference>
<dbReference type="HOGENOM" id="CLU_087854_2_0_2"/>
<dbReference type="OrthoDB" id="10499at2157"/>
<dbReference type="Proteomes" id="UP000002698">
    <property type="component" value="Chromosome"/>
</dbReference>
<dbReference type="GO" id="GO:0050568">
    <property type="term" value="F:protein-glutamine glutaminase activity"/>
    <property type="evidence" value="ECO:0007669"/>
    <property type="project" value="UniProtKB-UniRule"/>
</dbReference>
<dbReference type="GO" id="GO:0006935">
    <property type="term" value="P:chemotaxis"/>
    <property type="evidence" value="ECO:0007669"/>
    <property type="project" value="UniProtKB-UniRule"/>
</dbReference>
<dbReference type="CDD" id="cd16352">
    <property type="entry name" value="CheD"/>
    <property type="match status" value="1"/>
</dbReference>
<dbReference type="Gene3D" id="3.30.1330.200">
    <property type="match status" value="1"/>
</dbReference>
<dbReference type="HAMAP" id="MF_01440">
    <property type="entry name" value="CheD"/>
    <property type="match status" value="1"/>
</dbReference>
<dbReference type="InterPro" id="IPR038592">
    <property type="entry name" value="CheD-like_sf"/>
</dbReference>
<dbReference type="InterPro" id="IPR005659">
    <property type="entry name" value="Chemorcpt_Glu_NH3ase_CheD"/>
</dbReference>
<dbReference type="InterPro" id="IPR011324">
    <property type="entry name" value="Cytotoxic_necrot_fac-like_cat"/>
</dbReference>
<dbReference type="PANTHER" id="PTHR35147">
    <property type="entry name" value="CHEMORECEPTOR GLUTAMINE DEAMIDASE CHED-RELATED"/>
    <property type="match status" value="1"/>
</dbReference>
<dbReference type="PANTHER" id="PTHR35147:SF1">
    <property type="entry name" value="CHEMORECEPTOR GLUTAMINE DEAMIDASE CHED-RELATED"/>
    <property type="match status" value="1"/>
</dbReference>
<dbReference type="Pfam" id="PF03975">
    <property type="entry name" value="CheD"/>
    <property type="match status" value="1"/>
</dbReference>
<dbReference type="SUPFAM" id="SSF64438">
    <property type="entry name" value="CNF1/YfiH-like putative cysteine hydrolases"/>
    <property type="match status" value="1"/>
</dbReference>
<name>CHED_NATPD</name>
<proteinExistence type="inferred from homology"/>
<reference key="1">
    <citation type="journal article" date="2005" name="Genome Res.">
        <title>Living with two extremes: conclusions from the genome sequence of Natronomonas pharaonis.</title>
        <authorList>
            <person name="Falb M."/>
            <person name="Pfeiffer F."/>
            <person name="Palm P."/>
            <person name="Rodewald K."/>
            <person name="Hickmann V."/>
            <person name="Tittor J."/>
            <person name="Oesterhelt D."/>
        </authorList>
    </citation>
    <scope>NUCLEOTIDE SEQUENCE [LARGE SCALE GENOMIC DNA]</scope>
    <source>
        <strain>ATCC 35678 / DSM 2160 / CIP 103997 / JCM 8858 / NBRC 14720 / NCIMB 2260 / Gabara</strain>
    </source>
</reference>
<accession>Q3IRU8</accession>
<keyword id="KW-0145">Chemotaxis</keyword>
<keyword id="KW-0378">Hydrolase</keyword>
<keyword id="KW-1185">Reference proteome</keyword>